<accession>A3PF64</accession>
<gene>
    <name evidence="1" type="primary">ppc</name>
    <name type="ordered locus">P9301_17661</name>
</gene>
<comment type="function">
    <text evidence="1">Forms oxaloacetate, a four-carbon dicarboxylic acid source for the tricarboxylic acid cycle.</text>
</comment>
<comment type="catalytic activity">
    <reaction evidence="1">
        <text>oxaloacetate + phosphate = phosphoenolpyruvate + hydrogencarbonate</text>
        <dbReference type="Rhea" id="RHEA:28370"/>
        <dbReference type="ChEBI" id="CHEBI:16452"/>
        <dbReference type="ChEBI" id="CHEBI:17544"/>
        <dbReference type="ChEBI" id="CHEBI:43474"/>
        <dbReference type="ChEBI" id="CHEBI:58702"/>
        <dbReference type="EC" id="4.1.1.31"/>
    </reaction>
</comment>
<comment type="cofactor">
    <cofactor evidence="1">
        <name>Mg(2+)</name>
        <dbReference type="ChEBI" id="CHEBI:18420"/>
    </cofactor>
</comment>
<comment type="similarity">
    <text evidence="1">Belongs to the PEPCase type 1 family.</text>
</comment>
<organism>
    <name type="scientific">Prochlorococcus marinus (strain MIT 9301)</name>
    <dbReference type="NCBI Taxonomy" id="167546"/>
    <lineage>
        <taxon>Bacteria</taxon>
        <taxon>Bacillati</taxon>
        <taxon>Cyanobacteriota</taxon>
        <taxon>Cyanophyceae</taxon>
        <taxon>Synechococcales</taxon>
        <taxon>Prochlorococcaceae</taxon>
        <taxon>Prochlorococcus</taxon>
    </lineage>
</organism>
<dbReference type="EC" id="4.1.1.31" evidence="1"/>
<dbReference type="EMBL" id="CP000576">
    <property type="protein sequence ID" value="ABO18389.1"/>
    <property type="molecule type" value="Genomic_DNA"/>
</dbReference>
<dbReference type="RefSeq" id="WP_011863677.1">
    <property type="nucleotide sequence ID" value="NC_009091.1"/>
</dbReference>
<dbReference type="SMR" id="A3PF64"/>
<dbReference type="STRING" id="167546.P9301_17661"/>
<dbReference type="KEGG" id="pmg:P9301_17661"/>
<dbReference type="eggNOG" id="COG2352">
    <property type="taxonomic scope" value="Bacteria"/>
</dbReference>
<dbReference type="HOGENOM" id="CLU_006557_2_0_3"/>
<dbReference type="OrthoDB" id="9768133at2"/>
<dbReference type="Proteomes" id="UP000001430">
    <property type="component" value="Chromosome"/>
</dbReference>
<dbReference type="GO" id="GO:0005829">
    <property type="term" value="C:cytosol"/>
    <property type="evidence" value="ECO:0007669"/>
    <property type="project" value="TreeGrafter"/>
</dbReference>
<dbReference type="GO" id="GO:0000287">
    <property type="term" value="F:magnesium ion binding"/>
    <property type="evidence" value="ECO:0007669"/>
    <property type="project" value="UniProtKB-UniRule"/>
</dbReference>
<dbReference type="GO" id="GO:0008964">
    <property type="term" value="F:phosphoenolpyruvate carboxylase activity"/>
    <property type="evidence" value="ECO:0007669"/>
    <property type="project" value="UniProtKB-UniRule"/>
</dbReference>
<dbReference type="GO" id="GO:0015977">
    <property type="term" value="P:carbon fixation"/>
    <property type="evidence" value="ECO:0007669"/>
    <property type="project" value="UniProtKB-UniRule"/>
</dbReference>
<dbReference type="GO" id="GO:0006107">
    <property type="term" value="P:oxaloacetate metabolic process"/>
    <property type="evidence" value="ECO:0007669"/>
    <property type="project" value="UniProtKB-UniRule"/>
</dbReference>
<dbReference type="GO" id="GO:0006099">
    <property type="term" value="P:tricarboxylic acid cycle"/>
    <property type="evidence" value="ECO:0007669"/>
    <property type="project" value="InterPro"/>
</dbReference>
<dbReference type="Gene3D" id="1.20.1440.90">
    <property type="entry name" value="Phosphoenolpyruvate/pyruvate domain"/>
    <property type="match status" value="1"/>
</dbReference>
<dbReference type="HAMAP" id="MF_00595">
    <property type="entry name" value="PEPcase_type1"/>
    <property type="match status" value="1"/>
</dbReference>
<dbReference type="InterPro" id="IPR021135">
    <property type="entry name" value="PEP_COase"/>
</dbReference>
<dbReference type="InterPro" id="IPR022805">
    <property type="entry name" value="PEP_COase_bac/pln-type"/>
</dbReference>
<dbReference type="InterPro" id="IPR018129">
    <property type="entry name" value="PEP_COase_Lys_AS"/>
</dbReference>
<dbReference type="InterPro" id="IPR033129">
    <property type="entry name" value="PEPCASE_His_AS"/>
</dbReference>
<dbReference type="InterPro" id="IPR015813">
    <property type="entry name" value="Pyrv/PenolPyrv_kinase-like_dom"/>
</dbReference>
<dbReference type="NCBIfam" id="NF000584">
    <property type="entry name" value="PRK00009.1"/>
    <property type="match status" value="1"/>
</dbReference>
<dbReference type="PANTHER" id="PTHR30523">
    <property type="entry name" value="PHOSPHOENOLPYRUVATE CARBOXYLASE"/>
    <property type="match status" value="1"/>
</dbReference>
<dbReference type="PANTHER" id="PTHR30523:SF6">
    <property type="entry name" value="PHOSPHOENOLPYRUVATE CARBOXYLASE"/>
    <property type="match status" value="1"/>
</dbReference>
<dbReference type="Pfam" id="PF00311">
    <property type="entry name" value="PEPcase"/>
    <property type="match status" value="1"/>
</dbReference>
<dbReference type="PRINTS" id="PR00150">
    <property type="entry name" value="PEPCARBXLASE"/>
</dbReference>
<dbReference type="SUPFAM" id="SSF51621">
    <property type="entry name" value="Phosphoenolpyruvate/pyruvate domain"/>
    <property type="match status" value="1"/>
</dbReference>
<dbReference type="PROSITE" id="PS00781">
    <property type="entry name" value="PEPCASE_1"/>
    <property type="match status" value="1"/>
</dbReference>
<dbReference type="PROSITE" id="PS00393">
    <property type="entry name" value="PEPCASE_2"/>
    <property type="match status" value="1"/>
</dbReference>
<proteinExistence type="inferred from homology"/>
<protein>
    <recommendedName>
        <fullName evidence="1">Phosphoenolpyruvate carboxylase</fullName>
        <shortName evidence="1">PEPC</shortName>
        <shortName evidence="1">PEPCase</shortName>
        <ecNumber evidence="1">4.1.1.31</ecNumber>
    </recommendedName>
</protein>
<keyword id="KW-0120">Carbon dioxide fixation</keyword>
<keyword id="KW-0456">Lyase</keyword>
<keyword id="KW-0460">Magnesium</keyword>
<keyword id="KW-1185">Reference proteome</keyword>
<name>CAPP_PROM0</name>
<reference key="1">
    <citation type="journal article" date="2007" name="PLoS Genet.">
        <title>Patterns and implications of gene gain and loss in the evolution of Prochlorococcus.</title>
        <authorList>
            <person name="Kettler G.C."/>
            <person name="Martiny A.C."/>
            <person name="Huang K."/>
            <person name="Zucker J."/>
            <person name="Coleman M.L."/>
            <person name="Rodrigue S."/>
            <person name="Chen F."/>
            <person name="Lapidus A."/>
            <person name="Ferriera S."/>
            <person name="Johnson J."/>
            <person name="Steglich C."/>
            <person name="Church G.M."/>
            <person name="Richardson P."/>
            <person name="Chisholm S.W."/>
        </authorList>
    </citation>
    <scope>NUCLEOTIDE SEQUENCE [LARGE SCALE GENOMIC DNA]</scope>
    <source>
        <strain>MIT 9301</strain>
    </source>
</reference>
<feature type="chain" id="PRO_1000025570" description="Phosphoenolpyruvate carboxylase">
    <location>
        <begin position="1"/>
        <end position="989"/>
    </location>
</feature>
<feature type="active site" evidence="1">
    <location>
        <position position="175"/>
    </location>
</feature>
<feature type="active site" evidence="1">
    <location>
        <position position="630"/>
    </location>
</feature>
<sequence length="989" mass="114214">MESFRQIKNNNVDLISNNDPLDKNRLLIEDLWESVLREECPDDQAERLIQLKELSYSKQIDGNSSKTFKNEIVDIVNSMDLAESIAAARAFSLYFQLVNILEQRVEEDRYIQSFTNKDVQKSPDNLDPFAPALARQNAPVTFRELFYRLRKLNVPPGKLEELLQEMDIRLVFTAHPTEIVRHTIRHKQTRVANLLKKIQIEQFLTKDEKISLKTQLKEEVRLWWRTDELHQFKPSVLDEVDYSLHYFQQVLFNAMPQLRGRITEALTENYPDVQLPPESFCNFGSWVGSDRDGNPSVTPDITWRTACYQRQLMLDRYIVATSNLRDQLSVSMQWSQVSSSLLESLETDRVKFPEIYEARATRYRSEPYRLKLSYILEKLRLTQERNNLLADSGWKFDFEGEIDNKNIDKVENLYYKSVNEFTYDLELIKNSLISTDLTCDSVNNLLTQVHIFGFSLASLDIRQESTRHSDAIQELTNYLDLSVQYDQMSEEEKIKWLIDELNTKRPLIPSDVNWTKTTEETFSVFKMVKRLQQEFGSRICHSYVISMSHSASDLLEVLLLAKEMGLLDQDSQKSKLLVVPLFETVEDLQRAPEVMEKLFKLDFYKSLLPKVGESFKPLQELMLGYSDSNKDSGFVSSNWEIHRAQIALQNLSSRNNILLRLFHGRGGSVGRGGGPAYQAILAQPSGTLKGRIKITEQGEVLASKYSLPELALYNLETVTTAVIQNSLVNSRLDATPEWNQLMSRLAETSRSHYRKLVHENPDLLNFFQEVTPIEEISKLQISSRPARRKKGAKDLSSLRAIPWVFGWTQSRFLLPSWFGVGTALSAELNSDPQQIELLRVLHQRWPFFRMLISKVEMTLSKVDLEVARYYVDTLGSKENKDSFDNIFEVISKEYNLTKSLILEITGKNKLLESDRDLKSSVSLRNKTIIPLGFLQVSLLRRLRDQTRQPPISEFLIDKDESRRAYSRSELLRGALLTINGIAAGMRNTG</sequence>
<evidence type="ECO:0000255" key="1">
    <source>
        <dbReference type="HAMAP-Rule" id="MF_00595"/>
    </source>
</evidence>